<protein>
    <recommendedName>
        <fullName evidence="1">Ferric enterobactin-binding periplasmic protein FepB</fullName>
    </recommendedName>
</protein>
<proteinExistence type="inferred from homology"/>
<evidence type="ECO:0000250" key="1">
    <source>
        <dbReference type="UniProtKB" id="P0AEL6"/>
    </source>
</evidence>
<evidence type="ECO:0000255" key="2"/>
<evidence type="ECO:0000255" key="3">
    <source>
        <dbReference type="PROSITE-ProRule" id="PRU00344"/>
    </source>
</evidence>
<evidence type="ECO:0000305" key="4"/>
<reference key="1">
    <citation type="journal article" date="2002" name="Proc. Natl. Acad. Sci. U.S.A.">
        <title>Extensive mosaic structure revealed by the complete genome sequence of uropathogenic Escherichia coli.</title>
        <authorList>
            <person name="Welch R.A."/>
            <person name="Burland V."/>
            <person name="Plunkett G. III"/>
            <person name="Redford P."/>
            <person name="Roesch P."/>
            <person name="Rasko D."/>
            <person name="Buckles E.L."/>
            <person name="Liou S.-R."/>
            <person name="Boutin A."/>
            <person name="Hackett J."/>
            <person name="Stroud D."/>
            <person name="Mayhew G.F."/>
            <person name="Rose D.J."/>
            <person name="Zhou S."/>
            <person name="Schwartz D.C."/>
            <person name="Perna N.T."/>
            <person name="Mobley H.L.T."/>
            <person name="Donnenberg M.S."/>
            <person name="Blattner F.R."/>
        </authorList>
    </citation>
    <scope>NUCLEOTIDE SEQUENCE [LARGE SCALE GENOMIC DNA]</scope>
    <source>
        <strain>CFT073 / ATCC 700928 / UPEC</strain>
    </source>
</reference>
<feature type="signal peptide" evidence="2">
    <location>
        <begin position="1"/>
        <end position="26"/>
    </location>
</feature>
<feature type="chain" id="PRO_0000044625" description="Ferric enterobactin-binding periplasmic protein FepB">
    <location>
        <begin position="27"/>
        <end position="318"/>
    </location>
</feature>
<feature type="domain" description="Fe/B12 periplasmic-binding" evidence="3">
    <location>
        <begin position="48"/>
        <end position="318"/>
    </location>
</feature>
<sequence length="318" mass="34283">MRLAPLYRNALLLTGLLLSGIAAVQAADWPRQITDSRGTHTLESQPQRIVSTSVTLTGSLLAIDAPVIASGATTPNNRVADDQGFLRQWSKVAKERKLQRLYIGEPSAEAVAAQMPDLILISATGGDSALALYDQLSTIAPTLIINYDDKSWQSLLTQLGEITGHEKQAAERIAQFDKQLAAAKEQIKLPPQPVTAIVYTAAAHSANLWTPESAQGQMLEQLGFTLAKLPAGLNASQSQGKRHDIIQLGGENLAAGLNGESLFLFAGDQKDADAIYANPLLAHLPAVQNKQVYALGTETFRLDYYSAMQVLDRLKALF</sequence>
<organism>
    <name type="scientific">Escherichia coli O6:H1 (strain CFT073 / ATCC 700928 / UPEC)</name>
    <dbReference type="NCBI Taxonomy" id="199310"/>
    <lineage>
        <taxon>Bacteria</taxon>
        <taxon>Pseudomonadati</taxon>
        <taxon>Pseudomonadota</taxon>
        <taxon>Gammaproteobacteria</taxon>
        <taxon>Enterobacterales</taxon>
        <taxon>Enterobacteriaceae</taxon>
        <taxon>Escherichia</taxon>
    </lineage>
</organism>
<comment type="function">
    <text evidence="1">Part of the ABC transporter complex FepBDGC involved in ferric enterobactin uptake (By similarity). Binds ferric enterobactin (By similarity).</text>
</comment>
<comment type="subunit">
    <text evidence="1">The complex is composed of two ATP-binding proteins (FepC), two transmembrane proteins (FepD and FepG) and a solute-binding protein (FepB).</text>
</comment>
<comment type="subcellular location">
    <subcellularLocation>
        <location evidence="1">Periplasm</location>
    </subcellularLocation>
</comment>
<comment type="similarity">
    <text evidence="4">Belongs to the bacterial solute-binding protein 8 family.</text>
</comment>
<name>FEPB_ECOL6</name>
<dbReference type="EMBL" id="AE014075">
    <property type="protein sequence ID" value="AAN79154.1"/>
    <property type="molecule type" value="Genomic_DNA"/>
</dbReference>
<dbReference type="RefSeq" id="WP_001234311.1">
    <property type="nucleotide sequence ID" value="NZ_CP051263.1"/>
</dbReference>
<dbReference type="BMRB" id="P0AEL7"/>
<dbReference type="SMR" id="P0AEL7"/>
<dbReference type="STRING" id="199310.c0679"/>
<dbReference type="KEGG" id="ecc:c0679"/>
<dbReference type="eggNOG" id="COG4592">
    <property type="taxonomic scope" value="Bacteria"/>
</dbReference>
<dbReference type="HOGENOM" id="CLU_038034_4_0_6"/>
<dbReference type="BioCyc" id="ECOL199310:C0679-MONOMER"/>
<dbReference type="Proteomes" id="UP000001410">
    <property type="component" value="Chromosome"/>
</dbReference>
<dbReference type="GO" id="GO:0030288">
    <property type="term" value="C:outer membrane-bounded periplasmic space"/>
    <property type="evidence" value="ECO:0007669"/>
    <property type="project" value="TreeGrafter"/>
</dbReference>
<dbReference type="GO" id="GO:1901678">
    <property type="term" value="P:iron coordination entity transport"/>
    <property type="evidence" value="ECO:0007669"/>
    <property type="project" value="UniProtKB-ARBA"/>
</dbReference>
<dbReference type="CDD" id="cd01146">
    <property type="entry name" value="FhuD"/>
    <property type="match status" value="1"/>
</dbReference>
<dbReference type="FunFam" id="3.40.50.1980:FF:000014">
    <property type="entry name" value="Ferrienterobactin-binding periplasmic protein FepB"/>
    <property type="match status" value="1"/>
</dbReference>
<dbReference type="FunFam" id="3.40.50.1980:FF:000009">
    <property type="entry name" value="Iron-enterobactin transporter periplasmic binding protein"/>
    <property type="match status" value="1"/>
</dbReference>
<dbReference type="Gene3D" id="3.40.50.1980">
    <property type="entry name" value="Nitrogenase molybdenum iron protein domain"/>
    <property type="match status" value="2"/>
</dbReference>
<dbReference type="InterPro" id="IPR002491">
    <property type="entry name" value="ABC_transptr_periplasmic_BD"/>
</dbReference>
<dbReference type="InterPro" id="IPR051313">
    <property type="entry name" value="Bact_iron-sidero_bind"/>
</dbReference>
<dbReference type="NCBIfam" id="NF008200">
    <property type="entry name" value="PRK10957.1"/>
    <property type="match status" value="1"/>
</dbReference>
<dbReference type="PANTHER" id="PTHR30532:SF24">
    <property type="entry name" value="FERRIC ENTEROBACTIN-BINDING PERIPLASMIC PROTEIN FEPB"/>
    <property type="match status" value="1"/>
</dbReference>
<dbReference type="PANTHER" id="PTHR30532">
    <property type="entry name" value="IRON III DICITRATE-BINDING PERIPLASMIC PROTEIN"/>
    <property type="match status" value="1"/>
</dbReference>
<dbReference type="Pfam" id="PF01497">
    <property type="entry name" value="Peripla_BP_2"/>
    <property type="match status" value="1"/>
</dbReference>
<dbReference type="SUPFAM" id="SSF53807">
    <property type="entry name" value="Helical backbone' metal receptor"/>
    <property type="match status" value="1"/>
</dbReference>
<dbReference type="PROSITE" id="PS50983">
    <property type="entry name" value="FE_B12_PBP"/>
    <property type="match status" value="1"/>
</dbReference>
<keyword id="KW-0406">Ion transport</keyword>
<keyword id="KW-0408">Iron</keyword>
<keyword id="KW-0410">Iron transport</keyword>
<keyword id="KW-0574">Periplasm</keyword>
<keyword id="KW-1185">Reference proteome</keyword>
<keyword id="KW-0732">Signal</keyword>
<keyword id="KW-0813">Transport</keyword>
<gene>
    <name type="primary">fepB</name>
    <name type="ordered locus">c0679</name>
</gene>
<accession>P0AEL7</accession>
<accession>P14609</accession>